<organism>
    <name type="scientific">Bacillus anthracis</name>
    <dbReference type="NCBI Taxonomy" id="1392"/>
    <lineage>
        <taxon>Bacteria</taxon>
        <taxon>Bacillati</taxon>
        <taxon>Bacillota</taxon>
        <taxon>Bacilli</taxon>
        <taxon>Bacillales</taxon>
        <taxon>Bacillaceae</taxon>
        <taxon>Bacillus</taxon>
        <taxon>Bacillus cereus group</taxon>
    </lineage>
</organism>
<name>Y6613_BACAN</name>
<geneLocation type="plasmid">
    <name>pXO2</name>
</geneLocation>
<reference key="1">
    <citation type="journal article" date="1999" name="J. Appl. Microbiol.">
        <title>Sequence, assembly and analysis of pXO1 and pXO2.</title>
        <authorList>
            <person name="Okinaka R.T."/>
            <person name="Cloud K."/>
            <person name="Hampton O."/>
            <person name="Hoffmaster A."/>
            <person name="Hill K.K."/>
            <person name="Keim P."/>
            <person name="Koehler T."/>
            <person name="Lamke G."/>
            <person name="Kumano S."/>
            <person name="Manter D."/>
            <person name="Martinez Y."/>
            <person name="Ricke D."/>
            <person name="Svensson R."/>
            <person name="Jackson P.J."/>
        </authorList>
    </citation>
    <scope>NUCLEOTIDE SEQUENCE [GENOMIC DNA]</scope>
    <source>
        <strain>Pasteur</strain>
    </source>
</reference>
<reference key="2">
    <citation type="journal article" date="2002" name="Science">
        <title>Comparative genome sequencing for discovery of novel polymorphisms in Bacillus anthracis.</title>
        <authorList>
            <person name="Read T.D."/>
            <person name="Salzberg S.L."/>
            <person name="Pop M."/>
            <person name="Shumway M.F."/>
            <person name="Umayam L."/>
            <person name="Jiang L."/>
            <person name="Holtzapple E."/>
            <person name="Busch J.D."/>
            <person name="Smith K.L."/>
            <person name="Schupp J.M."/>
            <person name="Solomon D."/>
            <person name="Keim P."/>
            <person name="Fraser C.M."/>
        </authorList>
    </citation>
    <scope>NUCLEOTIDE SEQUENCE [GENOMIC DNA]</scope>
    <source>
        <strain>Ames / isolate Florida / A2012</strain>
    </source>
</reference>
<reference key="3">
    <citation type="journal article" date="2009" name="J. Bacteriol.">
        <title>The complete genome sequence of Bacillus anthracis Ames 'Ancestor'.</title>
        <authorList>
            <person name="Ravel J."/>
            <person name="Jiang L."/>
            <person name="Stanley S.T."/>
            <person name="Wilson M.R."/>
            <person name="Decker R.S."/>
            <person name="Read T.D."/>
            <person name="Worsham P."/>
            <person name="Keim P.S."/>
            <person name="Salzberg S.L."/>
            <person name="Fraser-Liggett C.M."/>
            <person name="Rasko D.A."/>
        </authorList>
    </citation>
    <scope>NUCLEOTIDE SEQUENCE [LARGE SCALE GENOMIC DNA]</scope>
    <source>
        <strain>Ames ancestor</strain>
    </source>
</reference>
<protein>
    <recommendedName>
        <fullName>Uncharacterized protein pXO2-83/BXB0113/GBAA_pXO2_0113</fullName>
    </recommendedName>
</protein>
<feature type="chain" id="PRO_0000216867" description="Uncharacterized protein pXO2-83/BXB0113/GBAA_pXO2_0113">
    <location>
        <begin position="1"/>
        <end position="142"/>
    </location>
</feature>
<proteinExistence type="predicted"/>
<gene>
    <name type="ordered locus">pXO2-83</name>
    <name type="ordered locus">BXB0113</name>
    <name type="ordered locus">GBAA_pXO2_0113</name>
</gene>
<accession>Q9RMV2</accession>
<sequence length="142" mass="16937">MEKKVYYSIVSSTRFSRNEENRTIIEDNIKKGENHFLIRNDDYGECFEVDFEKNITEEENENWILEAVIDFAKKYRITEFELWKKHEGDSTYDKGFGIVIEGSMDNPILKFKEVYSGSLDDWNITWGKGKQTYEKIYFKLAL</sequence>
<keyword id="KW-0614">Plasmid</keyword>
<keyword id="KW-1185">Reference proteome</keyword>
<dbReference type="EMBL" id="AF188935">
    <property type="protein sequence ID" value="AAF13687.1"/>
    <property type="molecule type" value="Genomic_DNA"/>
</dbReference>
<dbReference type="EMBL" id="AE011191">
    <property type="protein sequence ID" value="AAM26263.1"/>
    <property type="molecule type" value="Genomic_DNA"/>
</dbReference>
<dbReference type="EMBL" id="AE017335">
    <property type="protein sequence ID" value="AAT35525.1"/>
    <property type="molecule type" value="Genomic_DNA"/>
</dbReference>
<dbReference type="RefSeq" id="NP_053237.1">
    <property type="nucleotide sequence ID" value="NC_002146.1"/>
</dbReference>
<dbReference type="RefSeq" id="WP_000412851.1">
    <property type="nucleotide sequence ID" value="NZ_VTZL01000009.1"/>
</dbReference>
<dbReference type="SMR" id="Q9RMV2"/>
<dbReference type="GeneID" id="45025398"/>
<dbReference type="KEGG" id="bar:GBAA_pXO2_0113"/>
<dbReference type="HOGENOM" id="CLU_1811855_0_0_9"/>
<dbReference type="OMA" id="AIEGFME"/>
<dbReference type="Proteomes" id="UP000000594">
    <property type="component" value="Plasmid pXO2"/>
</dbReference>
<dbReference type="InterPro" id="IPR035115">
    <property type="entry name" value="DUF5514"/>
</dbReference>
<dbReference type="Pfam" id="PF17633">
    <property type="entry name" value="DUF5514"/>
    <property type="match status" value="1"/>
</dbReference>